<comment type="subcellular location">
    <subcellularLocation>
        <location evidence="2">Membrane</location>
        <topology evidence="2">Single-pass membrane protein</topology>
    </subcellularLocation>
</comment>
<accession>P44145</accession>
<name>Y1266_HAEIN</name>
<protein>
    <recommendedName>
        <fullName>Uncharacterized protein HI_1266</fullName>
    </recommendedName>
</protein>
<reference key="1">
    <citation type="journal article" date="1995" name="Science">
        <title>Whole-genome random sequencing and assembly of Haemophilus influenzae Rd.</title>
        <authorList>
            <person name="Fleischmann R.D."/>
            <person name="Adams M.D."/>
            <person name="White O."/>
            <person name="Clayton R.A."/>
            <person name="Kirkness E.F."/>
            <person name="Kerlavage A.R."/>
            <person name="Bult C.J."/>
            <person name="Tomb J.-F."/>
            <person name="Dougherty B.A."/>
            <person name="Merrick J.M."/>
            <person name="McKenney K."/>
            <person name="Sutton G.G."/>
            <person name="FitzHugh W."/>
            <person name="Fields C.A."/>
            <person name="Gocayne J.D."/>
            <person name="Scott J.D."/>
            <person name="Shirley R."/>
            <person name="Liu L.-I."/>
            <person name="Glodek A."/>
            <person name="Kelley J.M."/>
            <person name="Weidman J.F."/>
            <person name="Phillips C.A."/>
            <person name="Spriggs T."/>
            <person name="Hedblom E."/>
            <person name="Cotton M.D."/>
            <person name="Utterback T.R."/>
            <person name="Hanna M.C."/>
            <person name="Nguyen D.T."/>
            <person name="Saudek D.M."/>
            <person name="Brandon R.C."/>
            <person name="Fine L.D."/>
            <person name="Fritchman J.L."/>
            <person name="Fuhrmann J.L."/>
            <person name="Geoghagen N.S.M."/>
            <person name="Gnehm C.L."/>
            <person name="McDonald L.A."/>
            <person name="Small K.V."/>
            <person name="Fraser C.M."/>
            <person name="Smith H.O."/>
            <person name="Venter J.C."/>
        </authorList>
    </citation>
    <scope>NUCLEOTIDE SEQUENCE [LARGE SCALE GENOMIC DNA]</scope>
    <source>
        <strain>ATCC 51907 / DSM 11121 / KW20 / Rd</strain>
    </source>
</reference>
<proteinExistence type="predicted"/>
<feature type="chain" id="PRO_0000078018" description="Uncharacterized protein HI_1266">
    <location>
        <begin position="1"/>
        <end position="128"/>
    </location>
</feature>
<feature type="transmembrane region" description="Helical" evidence="1">
    <location>
        <begin position="8"/>
        <end position="28"/>
    </location>
</feature>
<gene>
    <name type="ordered locus">HI_1266</name>
</gene>
<keyword id="KW-0472">Membrane</keyword>
<keyword id="KW-1185">Reference proteome</keyword>
<keyword id="KW-0812">Transmembrane</keyword>
<keyword id="KW-1133">Transmembrane helix</keyword>
<evidence type="ECO:0000255" key="1"/>
<evidence type="ECO:0000305" key="2"/>
<dbReference type="EMBL" id="L42023">
    <property type="protein sequence ID" value="AAC22919.1"/>
    <property type="molecule type" value="Genomic_DNA"/>
</dbReference>
<dbReference type="PIR" id="A64024">
    <property type="entry name" value="A64024"/>
</dbReference>
<dbReference type="RefSeq" id="NP_439421.1">
    <property type="nucleotide sequence ID" value="NC_000907.1"/>
</dbReference>
<dbReference type="STRING" id="71421.HI_1266"/>
<dbReference type="EnsemblBacteria" id="AAC22919">
    <property type="protein sequence ID" value="AAC22919"/>
    <property type="gene ID" value="HI_1266"/>
</dbReference>
<dbReference type="KEGG" id="hin:HI_1266"/>
<dbReference type="PATRIC" id="fig|71421.8.peg.1318"/>
<dbReference type="eggNOG" id="ENOG502ZTF7">
    <property type="taxonomic scope" value="Bacteria"/>
</dbReference>
<dbReference type="HOGENOM" id="CLU_108349_0_0_6"/>
<dbReference type="OrthoDB" id="5687326at2"/>
<dbReference type="BioCyc" id="HINF71421:G1GJ1-1294-MONOMER"/>
<dbReference type="Proteomes" id="UP000000579">
    <property type="component" value="Chromosome"/>
</dbReference>
<dbReference type="GO" id="GO:0016020">
    <property type="term" value="C:membrane"/>
    <property type="evidence" value="ECO:0007669"/>
    <property type="project" value="UniProtKB-SubCell"/>
</dbReference>
<sequence length="128" mass="15107">MLQLVFRYQAIYLIFAGFTVFGLLLHFYSRKKKWIKINTQFADLITHNRMPSYCNLDRLMMTFEHFSIQQIAEQLNLSLPILLNELSQAQINITDSHRTLRENFPLNDEKIFAAITIALKVRFNPTLL</sequence>
<organism>
    <name type="scientific">Haemophilus influenzae (strain ATCC 51907 / DSM 11121 / KW20 / Rd)</name>
    <dbReference type="NCBI Taxonomy" id="71421"/>
    <lineage>
        <taxon>Bacteria</taxon>
        <taxon>Pseudomonadati</taxon>
        <taxon>Pseudomonadota</taxon>
        <taxon>Gammaproteobacteria</taxon>
        <taxon>Pasteurellales</taxon>
        <taxon>Pasteurellaceae</taxon>
        <taxon>Haemophilus</taxon>
    </lineage>
</organism>